<organism>
    <name type="scientific">Streptococcus pneumoniae (strain 70585)</name>
    <dbReference type="NCBI Taxonomy" id="488221"/>
    <lineage>
        <taxon>Bacteria</taxon>
        <taxon>Bacillati</taxon>
        <taxon>Bacillota</taxon>
        <taxon>Bacilli</taxon>
        <taxon>Lactobacillales</taxon>
        <taxon>Streptococcaceae</taxon>
        <taxon>Streptococcus</taxon>
    </lineage>
</organism>
<gene>
    <name type="ordered locus">SP70585_1928</name>
</gene>
<feature type="chain" id="PRO_1000197784" description="Putative membrane protein insertion efficiency factor">
    <location>
        <begin position="1"/>
        <end position="80"/>
    </location>
</feature>
<feature type="region of interest" description="Disordered" evidence="2">
    <location>
        <begin position="61"/>
        <end position="80"/>
    </location>
</feature>
<feature type="compositionally biased region" description="Basic and acidic residues" evidence="2">
    <location>
        <begin position="62"/>
        <end position="80"/>
    </location>
</feature>
<name>YIDD_STRP7</name>
<evidence type="ECO:0000255" key="1">
    <source>
        <dbReference type="HAMAP-Rule" id="MF_00386"/>
    </source>
</evidence>
<evidence type="ECO:0000256" key="2">
    <source>
        <dbReference type="SAM" id="MobiDB-lite"/>
    </source>
</evidence>
<accession>C1C9D9</accession>
<dbReference type="EMBL" id="CP000918">
    <property type="protein sequence ID" value="ACO16855.1"/>
    <property type="molecule type" value="Genomic_DNA"/>
</dbReference>
<dbReference type="KEGG" id="snm:SP70585_1928"/>
<dbReference type="HOGENOM" id="CLU_144811_5_2_9"/>
<dbReference type="Proteomes" id="UP000002211">
    <property type="component" value="Chromosome"/>
</dbReference>
<dbReference type="GO" id="GO:0005886">
    <property type="term" value="C:plasma membrane"/>
    <property type="evidence" value="ECO:0007669"/>
    <property type="project" value="UniProtKB-SubCell"/>
</dbReference>
<dbReference type="HAMAP" id="MF_00386">
    <property type="entry name" value="UPF0161_YidD"/>
    <property type="match status" value="1"/>
</dbReference>
<dbReference type="InterPro" id="IPR002696">
    <property type="entry name" value="Membr_insert_effic_factor_YidD"/>
</dbReference>
<dbReference type="NCBIfam" id="TIGR00278">
    <property type="entry name" value="membrane protein insertion efficiency factor YidD"/>
    <property type="match status" value="1"/>
</dbReference>
<dbReference type="PANTHER" id="PTHR33383">
    <property type="entry name" value="MEMBRANE PROTEIN INSERTION EFFICIENCY FACTOR-RELATED"/>
    <property type="match status" value="1"/>
</dbReference>
<dbReference type="PANTHER" id="PTHR33383:SF1">
    <property type="entry name" value="MEMBRANE PROTEIN INSERTION EFFICIENCY FACTOR-RELATED"/>
    <property type="match status" value="1"/>
</dbReference>
<dbReference type="Pfam" id="PF01809">
    <property type="entry name" value="YidD"/>
    <property type="match status" value="1"/>
</dbReference>
<dbReference type="SMART" id="SM01234">
    <property type="entry name" value="Haemolytic"/>
    <property type="match status" value="1"/>
</dbReference>
<reference key="1">
    <citation type="journal article" date="2010" name="Genome Biol.">
        <title>Structure and dynamics of the pan-genome of Streptococcus pneumoniae and closely related species.</title>
        <authorList>
            <person name="Donati C."/>
            <person name="Hiller N.L."/>
            <person name="Tettelin H."/>
            <person name="Muzzi A."/>
            <person name="Croucher N.J."/>
            <person name="Angiuoli S.V."/>
            <person name="Oggioni M."/>
            <person name="Dunning Hotopp J.C."/>
            <person name="Hu F.Z."/>
            <person name="Riley D.R."/>
            <person name="Covacci A."/>
            <person name="Mitchell T.J."/>
            <person name="Bentley S.D."/>
            <person name="Kilian M."/>
            <person name="Ehrlich G.D."/>
            <person name="Rappuoli R."/>
            <person name="Moxon E.R."/>
            <person name="Masignani V."/>
        </authorList>
    </citation>
    <scope>NUCLEOTIDE SEQUENCE [LARGE SCALE GENOMIC DNA]</scope>
    <source>
        <strain>70585</strain>
    </source>
</reference>
<keyword id="KW-1003">Cell membrane</keyword>
<keyword id="KW-0472">Membrane</keyword>
<proteinExistence type="inferred from homology"/>
<comment type="function">
    <text evidence="1">Could be involved in insertion of integral membrane proteins into the membrane.</text>
</comment>
<comment type="subcellular location">
    <subcellularLocation>
        <location evidence="1">Cell membrane</location>
        <topology evidence="1">Peripheral membrane protein</topology>
        <orientation evidence="1">Cytoplasmic side</orientation>
    </subcellularLocation>
</comment>
<comment type="similarity">
    <text evidence="1">Belongs to the UPF0161 family.</text>
</comment>
<sequence length="80" mass="9306">MKRILIAPVRFYQRFISPVFPPSCRFDLTCSNYMIQAIEKHGFKGVLMGLARILRCHPWSKTGKDPVPDHFSLKRNQEGE</sequence>
<protein>
    <recommendedName>
        <fullName evidence="1">Putative membrane protein insertion efficiency factor</fullName>
    </recommendedName>
</protein>